<sequence length="817" mass="95200">MEYNFREIEKKWQQKWFSQNKYKVTEDSPKPKYYVLEMFPYPSGKLHMGHVRNYSIGDVFARFMRLKGYNVLHPMGWDAFGLPAENAAIKHGIHPSDWTWSNIENMKRQLKELGISYDWDREVATCHPDYYKWTQWMFLQFYKAGLAYRKRSYVNWCPSCETVLANEQVVNGRCERCKSLVGKKDLEQWFFRITKYAERLLRDIDKLDGWPEKVKIMQKNWIGRSEGAEIEFEIDGLGKRIKVFTTRPDTLFGVTYLVLAPEHPLTKEIIAGKPQEKECLEFIEKMQYLNEIERTSTETEKEGRFTGGYAIHPLTGKKVPIYIANYVLVDYGTGAVMGVPAHDQRDFEFAKKYNLPIKVVIKGDGVDIQNLQSAYEGEGVLINSGEFNGLKNTEAMKKITEYLEKNGYGKACVTYKLRDWLISRQRYWGAPIPIVYCDDCGIVPVPEEELPVLLPYNVEFKPTGQSPLAYCEEFVNTTCPKCGKPARRETDTMDTFICSSWYYFRYTDPKNSEKPFEKSLVDYWLPVDQYIGGVEHAILHLLYSRFFTKVLYDLGYISFEEPFKNLLTQGMVLKDGAKMSKSLGNIVSPEEIVEKYGADTARLFILFAAPPERDLEWSDQGVEGCFRFLNRLWRLYIELKDKLSDSSLPGQSELDDELNYRLNYTIKKVTEDIGERFNFNTAISSIMELLNFLYDYKEKGSLNRELILKTLKNFLILIYPFTPHIACELWEIMGFEGDIEDVSWPEYDESALVRKNVEIAVQINGKVRARFDVPVDISEEELKQKIMNNEKIKTLLEGKEIVKFIYVKNRLVNIVIK</sequence>
<gene>
    <name evidence="1" type="primary">leuS</name>
    <name type="ordered locus">Csac_1819</name>
</gene>
<reference key="1">
    <citation type="submission" date="2007-04" db="EMBL/GenBank/DDBJ databases">
        <title>Genome sequence of the thermophilic hydrogen-producing bacterium Caldicellulosiruptor saccharolyticus DSM 8903.</title>
        <authorList>
            <person name="Copeland A."/>
            <person name="Lucas S."/>
            <person name="Lapidus A."/>
            <person name="Barry K."/>
            <person name="Detter J.C."/>
            <person name="Glavina del Rio T."/>
            <person name="Hammon N."/>
            <person name="Israni S."/>
            <person name="Dalin E."/>
            <person name="Tice H."/>
            <person name="Pitluck S."/>
            <person name="Kiss H."/>
            <person name="Brettin T."/>
            <person name="Bruce D."/>
            <person name="Han C."/>
            <person name="Schmutz J."/>
            <person name="Larimer F."/>
            <person name="Land M."/>
            <person name="Hauser L."/>
            <person name="Kyrpides N."/>
            <person name="Lykidis A."/>
            <person name="van de Werken H.J.G."/>
            <person name="Verhaart M.R.A."/>
            <person name="VanFossen A.L."/>
            <person name="Lewis D.L."/>
            <person name="Nichols J.D."/>
            <person name="Goorissen H.P."/>
            <person name="van Niel E.W.J."/>
            <person name="Stams F.J.M."/>
            <person name="Willquist K.U."/>
            <person name="Ward D.E."/>
            <person name="van der Oost J."/>
            <person name="Kelly R.M."/>
            <person name="Kengen S.M.W."/>
            <person name="Richardson P."/>
        </authorList>
    </citation>
    <scope>NUCLEOTIDE SEQUENCE [LARGE SCALE GENOMIC DNA]</scope>
    <source>
        <strain>ATCC 43494 / DSM 8903 / Tp8T 6331</strain>
    </source>
</reference>
<name>SYL_CALS8</name>
<organism>
    <name type="scientific">Caldicellulosiruptor saccharolyticus (strain ATCC 43494 / DSM 8903 / Tp8T 6331)</name>
    <dbReference type="NCBI Taxonomy" id="351627"/>
    <lineage>
        <taxon>Bacteria</taxon>
        <taxon>Bacillati</taxon>
        <taxon>Bacillota</taxon>
        <taxon>Bacillota incertae sedis</taxon>
        <taxon>Caldicellulosiruptorales</taxon>
        <taxon>Caldicellulosiruptoraceae</taxon>
        <taxon>Caldicellulosiruptor</taxon>
    </lineage>
</organism>
<evidence type="ECO:0000255" key="1">
    <source>
        <dbReference type="HAMAP-Rule" id="MF_00049"/>
    </source>
</evidence>
<comment type="catalytic activity">
    <reaction evidence="1">
        <text>tRNA(Leu) + L-leucine + ATP = L-leucyl-tRNA(Leu) + AMP + diphosphate</text>
        <dbReference type="Rhea" id="RHEA:11688"/>
        <dbReference type="Rhea" id="RHEA-COMP:9613"/>
        <dbReference type="Rhea" id="RHEA-COMP:9622"/>
        <dbReference type="ChEBI" id="CHEBI:30616"/>
        <dbReference type="ChEBI" id="CHEBI:33019"/>
        <dbReference type="ChEBI" id="CHEBI:57427"/>
        <dbReference type="ChEBI" id="CHEBI:78442"/>
        <dbReference type="ChEBI" id="CHEBI:78494"/>
        <dbReference type="ChEBI" id="CHEBI:456215"/>
        <dbReference type="EC" id="6.1.1.4"/>
    </reaction>
</comment>
<comment type="subcellular location">
    <subcellularLocation>
        <location evidence="1">Cytoplasm</location>
    </subcellularLocation>
</comment>
<comment type="similarity">
    <text evidence="1">Belongs to the class-I aminoacyl-tRNA synthetase family.</text>
</comment>
<accession>A4XKG9</accession>
<proteinExistence type="inferred from homology"/>
<feature type="chain" id="PRO_1000009315" description="Leucine--tRNA ligase">
    <location>
        <begin position="1"/>
        <end position="817"/>
    </location>
</feature>
<feature type="short sequence motif" description="'HIGH' region">
    <location>
        <begin position="40"/>
        <end position="50"/>
    </location>
</feature>
<feature type="short sequence motif" description="'KMSKS' region">
    <location>
        <begin position="578"/>
        <end position="582"/>
    </location>
</feature>
<feature type="binding site" evidence="1">
    <location>
        <position position="581"/>
    </location>
    <ligand>
        <name>ATP</name>
        <dbReference type="ChEBI" id="CHEBI:30616"/>
    </ligand>
</feature>
<dbReference type="EC" id="6.1.1.4" evidence="1"/>
<dbReference type="EMBL" id="CP000679">
    <property type="protein sequence ID" value="ABP67404.1"/>
    <property type="molecule type" value="Genomic_DNA"/>
</dbReference>
<dbReference type="RefSeq" id="WP_011917338.1">
    <property type="nucleotide sequence ID" value="NC_009437.1"/>
</dbReference>
<dbReference type="SMR" id="A4XKG9"/>
<dbReference type="STRING" id="351627.Csac_1819"/>
<dbReference type="KEGG" id="csc:Csac_1819"/>
<dbReference type="eggNOG" id="COG0495">
    <property type="taxonomic scope" value="Bacteria"/>
</dbReference>
<dbReference type="HOGENOM" id="CLU_004427_0_0_9"/>
<dbReference type="OrthoDB" id="9810365at2"/>
<dbReference type="Proteomes" id="UP000000256">
    <property type="component" value="Chromosome"/>
</dbReference>
<dbReference type="GO" id="GO:0005829">
    <property type="term" value="C:cytosol"/>
    <property type="evidence" value="ECO:0007669"/>
    <property type="project" value="TreeGrafter"/>
</dbReference>
<dbReference type="GO" id="GO:0002161">
    <property type="term" value="F:aminoacyl-tRNA deacylase activity"/>
    <property type="evidence" value="ECO:0007669"/>
    <property type="project" value="InterPro"/>
</dbReference>
<dbReference type="GO" id="GO:0005524">
    <property type="term" value="F:ATP binding"/>
    <property type="evidence" value="ECO:0007669"/>
    <property type="project" value="UniProtKB-UniRule"/>
</dbReference>
<dbReference type="GO" id="GO:0004823">
    <property type="term" value="F:leucine-tRNA ligase activity"/>
    <property type="evidence" value="ECO:0007669"/>
    <property type="project" value="UniProtKB-UniRule"/>
</dbReference>
<dbReference type="GO" id="GO:0006429">
    <property type="term" value="P:leucyl-tRNA aminoacylation"/>
    <property type="evidence" value="ECO:0007669"/>
    <property type="project" value="UniProtKB-UniRule"/>
</dbReference>
<dbReference type="CDD" id="cd07958">
    <property type="entry name" value="Anticodon_Ia_Leu_BEm"/>
    <property type="match status" value="1"/>
</dbReference>
<dbReference type="CDD" id="cd00812">
    <property type="entry name" value="LeuRS_core"/>
    <property type="match status" value="1"/>
</dbReference>
<dbReference type="FunFam" id="3.10.20.590:FF:000001">
    <property type="entry name" value="Leucine--tRNA ligase"/>
    <property type="match status" value="1"/>
</dbReference>
<dbReference type="FunFam" id="3.40.50.620:FF:000003">
    <property type="entry name" value="Leucine--tRNA ligase"/>
    <property type="match status" value="1"/>
</dbReference>
<dbReference type="FunFam" id="3.40.50.620:FF:000212">
    <property type="entry name" value="Leucine--tRNA ligase"/>
    <property type="match status" value="1"/>
</dbReference>
<dbReference type="FunFam" id="1.10.730.10:FF:000011">
    <property type="entry name" value="Leucine--tRNA ligase chloroplastic/mitochondrial"/>
    <property type="match status" value="1"/>
</dbReference>
<dbReference type="Gene3D" id="3.10.20.590">
    <property type="match status" value="1"/>
</dbReference>
<dbReference type="Gene3D" id="3.40.50.620">
    <property type="entry name" value="HUPs"/>
    <property type="match status" value="2"/>
</dbReference>
<dbReference type="Gene3D" id="1.10.730.10">
    <property type="entry name" value="Isoleucyl-tRNA Synthetase, Domain 1"/>
    <property type="match status" value="1"/>
</dbReference>
<dbReference type="HAMAP" id="MF_00049_B">
    <property type="entry name" value="Leu_tRNA_synth_B"/>
    <property type="match status" value="1"/>
</dbReference>
<dbReference type="InterPro" id="IPR001412">
    <property type="entry name" value="aa-tRNA-synth_I_CS"/>
</dbReference>
<dbReference type="InterPro" id="IPR002300">
    <property type="entry name" value="aa-tRNA-synth_Ia"/>
</dbReference>
<dbReference type="InterPro" id="IPR002302">
    <property type="entry name" value="Leu-tRNA-ligase"/>
</dbReference>
<dbReference type="InterPro" id="IPR025709">
    <property type="entry name" value="Leu_tRNA-synth_edit"/>
</dbReference>
<dbReference type="InterPro" id="IPR013155">
    <property type="entry name" value="M/V/L/I-tRNA-synth_anticd-bd"/>
</dbReference>
<dbReference type="InterPro" id="IPR015413">
    <property type="entry name" value="Methionyl/Leucyl_tRNA_Synth"/>
</dbReference>
<dbReference type="InterPro" id="IPR014729">
    <property type="entry name" value="Rossmann-like_a/b/a_fold"/>
</dbReference>
<dbReference type="InterPro" id="IPR009080">
    <property type="entry name" value="tRNAsynth_Ia_anticodon-bd"/>
</dbReference>
<dbReference type="InterPro" id="IPR009008">
    <property type="entry name" value="Val/Leu/Ile-tRNA-synth_edit"/>
</dbReference>
<dbReference type="NCBIfam" id="TIGR00396">
    <property type="entry name" value="leuS_bact"/>
    <property type="match status" value="1"/>
</dbReference>
<dbReference type="PANTHER" id="PTHR43740:SF2">
    <property type="entry name" value="LEUCINE--TRNA LIGASE, MITOCHONDRIAL"/>
    <property type="match status" value="1"/>
</dbReference>
<dbReference type="PANTHER" id="PTHR43740">
    <property type="entry name" value="LEUCYL-TRNA SYNTHETASE"/>
    <property type="match status" value="1"/>
</dbReference>
<dbReference type="Pfam" id="PF08264">
    <property type="entry name" value="Anticodon_1"/>
    <property type="match status" value="1"/>
</dbReference>
<dbReference type="Pfam" id="PF00133">
    <property type="entry name" value="tRNA-synt_1"/>
    <property type="match status" value="1"/>
</dbReference>
<dbReference type="Pfam" id="PF13603">
    <property type="entry name" value="tRNA-synt_1_2"/>
    <property type="match status" value="1"/>
</dbReference>
<dbReference type="Pfam" id="PF09334">
    <property type="entry name" value="tRNA-synt_1g"/>
    <property type="match status" value="1"/>
</dbReference>
<dbReference type="PRINTS" id="PR00985">
    <property type="entry name" value="TRNASYNTHLEU"/>
</dbReference>
<dbReference type="SUPFAM" id="SSF47323">
    <property type="entry name" value="Anticodon-binding domain of a subclass of class I aminoacyl-tRNA synthetases"/>
    <property type="match status" value="1"/>
</dbReference>
<dbReference type="SUPFAM" id="SSF52374">
    <property type="entry name" value="Nucleotidylyl transferase"/>
    <property type="match status" value="1"/>
</dbReference>
<dbReference type="SUPFAM" id="SSF50677">
    <property type="entry name" value="ValRS/IleRS/LeuRS editing domain"/>
    <property type="match status" value="1"/>
</dbReference>
<dbReference type="PROSITE" id="PS00178">
    <property type="entry name" value="AA_TRNA_LIGASE_I"/>
    <property type="match status" value="1"/>
</dbReference>
<keyword id="KW-0030">Aminoacyl-tRNA synthetase</keyword>
<keyword id="KW-0067">ATP-binding</keyword>
<keyword id="KW-0963">Cytoplasm</keyword>
<keyword id="KW-0436">Ligase</keyword>
<keyword id="KW-0547">Nucleotide-binding</keyword>
<keyword id="KW-0648">Protein biosynthesis</keyword>
<protein>
    <recommendedName>
        <fullName evidence="1">Leucine--tRNA ligase</fullName>
        <ecNumber evidence="1">6.1.1.4</ecNumber>
    </recommendedName>
    <alternativeName>
        <fullName evidence="1">Leucyl-tRNA synthetase</fullName>
        <shortName evidence="1">LeuRS</shortName>
    </alternativeName>
</protein>